<gene>
    <name type="primary">SRY</name>
    <name type="synonym">TDF</name>
</gene>
<feature type="chain" id="PRO_0000048696" description="Sex-determining region Y protein">
    <location>
        <begin position="1"/>
        <end position="201"/>
    </location>
</feature>
<feature type="DNA-binding region" description="HMG box" evidence="3">
    <location>
        <begin position="54"/>
        <end position="122"/>
    </location>
</feature>
<feature type="region of interest" description="Disordered" evidence="4">
    <location>
        <begin position="162"/>
        <end position="201"/>
    </location>
</feature>
<feature type="compositionally biased region" description="Polar residues" evidence="4">
    <location>
        <begin position="186"/>
        <end position="195"/>
    </location>
</feature>
<sequence length="201" mass="23096">MFRTVNGEDYSPAVQQRNILDFGKAHSLLWTDNGSANDRCETGGNCRESGQDRVKRPMNAFIVWSRDQRRKVALENPQMQNSEISKRLGYDWKMLTEAEKQPFFEEAQRLRAMHRDKYPGYKYRPRRKAKEATEIASRRLFSTVQPNAHRGDVVPLPIQGRLRQGHTFTNGKPVKPLTAHEHKQLTPATGASQQLDKPAPQ</sequence>
<accession>Q864P6</accession>
<organism>
    <name type="scientific">Peponocephala electra</name>
    <name type="common">Melon-headed whale</name>
    <name type="synonym">Lagenorhynchus electra</name>
    <dbReference type="NCBI Taxonomy" id="103596"/>
    <lineage>
        <taxon>Eukaryota</taxon>
        <taxon>Metazoa</taxon>
        <taxon>Chordata</taxon>
        <taxon>Craniata</taxon>
        <taxon>Vertebrata</taxon>
        <taxon>Euteleostomi</taxon>
        <taxon>Mammalia</taxon>
        <taxon>Eutheria</taxon>
        <taxon>Laurasiatheria</taxon>
        <taxon>Artiodactyla</taxon>
        <taxon>Whippomorpha</taxon>
        <taxon>Cetacea</taxon>
        <taxon>Odontoceti</taxon>
        <taxon>Delphinidae</taxon>
        <taxon>Peponocephala</taxon>
    </lineage>
</organism>
<name>SRY_PENEL</name>
<dbReference type="EMBL" id="AB108525">
    <property type="protein sequence ID" value="BAC75657.1"/>
    <property type="molecule type" value="Genomic_DNA"/>
</dbReference>
<dbReference type="SMR" id="Q864P6"/>
<dbReference type="GO" id="GO:0005737">
    <property type="term" value="C:cytoplasm"/>
    <property type="evidence" value="ECO:0007669"/>
    <property type="project" value="UniProtKB-SubCell"/>
</dbReference>
<dbReference type="GO" id="GO:0016607">
    <property type="term" value="C:nuclear speck"/>
    <property type="evidence" value="ECO:0007669"/>
    <property type="project" value="UniProtKB-SubCell"/>
</dbReference>
<dbReference type="GO" id="GO:0005634">
    <property type="term" value="C:nucleus"/>
    <property type="evidence" value="ECO:0000250"/>
    <property type="project" value="UniProtKB"/>
</dbReference>
<dbReference type="GO" id="GO:0005516">
    <property type="term" value="F:calmodulin binding"/>
    <property type="evidence" value="ECO:0007669"/>
    <property type="project" value="UniProtKB-KW"/>
</dbReference>
<dbReference type="GO" id="GO:0001228">
    <property type="term" value="F:DNA-binding transcription activator activity, RNA polymerase II-specific"/>
    <property type="evidence" value="ECO:0007669"/>
    <property type="project" value="TreeGrafter"/>
</dbReference>
<dbReference type="GO" id="GO:0000978">
    <property type="term" value="F:RNA polymerase II cis-regulatory region sequence-specific DNA binding"/>
    <property type="evidence" value="ECO:0007669"/>
    <property type="project" value="TreeGrafter"/>
</dbReference>
<dbReference type="GO" id="GO:0030154">
    <property type="term" value="P:cell differentiation"/>
    <property type="evidence" value="ECO:0007669"/>
    <property type="project" value="UniProtKB-KW"/>
</dbReference>
<dbReference type="GO" id="GO:0030238">
    <property type="term" value="P:male sex determination"/>
    <property type="evidence" value="ECO:0007669"/>
    <property type="project" value="InterPro"/>
</dbReference>
<dbReference type="GO" id="GO:0007548">
    <property type="term" value="P:sex differentiation"/>
    <property type="evidence" value="ECO:0007669"/>
    <property type="project" value="UniProtKB-KW"/>
</dbReference>
<dbReference type="CDD" id="cd22034">
    <property type="entry name" value="HMG-box_SoxA_SRY"/>
    <property type="match status" value="1"/>
</dbReference>
<dbReference type="FunFam" id="1.10.30.10:FF:000002">
    <property type="entry name" value="transcription factor Sox-2"/>
    <property type="match status" value="1"/>
</dbReference>
<dbReference type="Gene3D" id="1.10.30.10">
    <property type="entry name" value="High mobility group box domain"/>
    <property type="match status" value="1"/>
</dbReference>
<dbReference type="InterPro" id="IPR009071">
    <property type="entry name" value="HMG_box_dom"/>
</dbReference>
<dbReference type="InterPro" id="IPR036910">
    <property type="entry name" value="HMG_box_dom_sf"/>
</dbReference>
<dbReference type="InterPro" id="IPR017253">
    <property type="entry name" value="SRY"/>
</dbReference>
<dbReference type="InterPro" id="IPR050140">
    <property type="entry name" value="SRY-related_HMG-box_TF-like"/>
</dbReference>
<dbReference type="PANTHER" id="PTHR10270:SF161">
    <property type="entry name" value="SEX-DETERMINING REGION Y PROTEIN"/>
    <property type="match status" value="1"/>
</dbReference>
<dbReference type="PANTHER" id="PTHR10270">
    <property type="entry name" value="SOX TRANSCRIPTION FACTOR"/>
    <property type="match status" value="1"/>
</dbReference>
<dbReference type="Pfam" id="PF00505">
    <property type="entry name" value="HMG_box"/>
    <property type="match status" value="1"/>
</dbReference>
<dbReference type="PIRSF" id="PIRSF037653">
    <property type="entry name" value="SRY"/>
    <property type="match status" value="1"/>
</dbReference>
<dbReference type="SMART" id="SM00398">
    <property type="entry name" value="HMG"/>
    <property type="match status" value="1"/>
</dbReference>
<dbReference type="SUPFAM" id="SSF47095">
    <property type="entry name" value="HMG-box"/>
    <property type="match status" value="1"/>
</dbReference>
<dbReference type="PROSITE" id="PS50118">
    <property type="entry name" value="HMG_BOX_2"/>
    <property type="match status" value="1"/>
</dbReference>
<proteinExistence type="inferred from homology"/>
<reference key="1">
    <citation type="journal article" date="2003" name="Mammal Study">
        <title>SRY gene structure and phylogeny in the cetacean species.</title>
        <authorList>
            <person name="Nishida S."/>
            <person name="Pastene L.A."/>
            <person name="Goto M."/>
            <person name="Koike H."/>
        </authorList>
    </citation>
    <scope>NUCLEOTIDE SEQUENCE [GENOMIC DNA]</scope>
</reference>
<keyword id="KW-0010">Activator</keyword>
<keyword id="KW-0112">Calmodulin-binding</keyword>
<keyword id="KW-0963">Cytoplasm</keyword>
<keyword id="KW-0221">Differentiation</keyword>
<keyword id="KW-0238">DNA-binding</keyword>
<keyword id="KW-0539">Nucleus</keyword>
<keyword id="KW-0726">Sexual differentiation</keyword>
<keyword id="KW-0804">Transcription</keyword>
<keyword id="KW-0805">Transcription regulation</keyword>
<evidence type="ECO:0000250" key="1">
    <source>
        <dbReference type="UniProtKB" id="P36394"/>
    </source>
</evidence>
<evidence type="ECO:0000250" key="2">
    <source>
        <dbReference type="UniProtKB" id="Q05066"/>
    </source>
</evidence>
<evidence type="ECO:0000255" key="3">
    <source>
        <dbReference type="PROSITE-ProRule" id="PRU00267"/>
    </source>
</evidence>
<evidence type="ECO:0000256" key="4">
    <source>
        <dbReference type="SAM" id="MobiDB-lite"/>
    </source>
</evidence>
<evidence type="ECO:0000305" key="5"/>
<protein>
    <recommendedName>
        <fullName>Sex-determining region Y protein</fullName>
    </recommendedName>
    <alternativeName>
        <fullName>Testis-determining factor</fullName>
    </alternativeName>
</protein>
<comment type="function">
    <text evidence="1 2">Transcriptional regulator that controls a genetic switch in male development. It is necessary and sufficient for initiating male sex determination by directing the development of supporting cell precursors (pre-Sertoli cells) as Sertoli rather than granulosa cells. Involved in different aspects of gene regulation including promoter activation or repression. Binds to the DNA consensus sequence 5'-[AT]AACAA[AT]-3'. SRY HMG box recognizes DNA by partial intercalation in the minor groove and promotes DNA bending. Also involved in pre-mRNA splicing (By similarity). In male adult brain involved in the maintenance of motor functions of dopaminergic neurons (By similarity).</text>
</comment>
<comment type="subunit">
    <text evidence="2">Interacts with CALM, EP300, HDAC3, KPNB1, ZNF208 isoform KRAB-O, PARP1, SLC9A3R2 and WT1. The interaction with EP300 modulates its DNA-binding activity. The interaction with KPNB1 is sensitive to dissociation by Ran in the GTP-bound form. Interaction with PARP1 impaired its DNA-binding activity.</text>
</comment>
<comment type="subcellular location">
    <subcellularLocation>
        <location evidence="2">Nucleus speckle</location>
    </subcellularLocation>
    <subcellularLocation>
        <location evidence="2">Cytoplasm</location>
    </subcellularLocation>
    <subcellularLocation>
        <location evidence="2">Nucleus</location>
    </subcellularLocation>
</comment>
<comment type="similarity">
    <text evidence="5">Belongs to the SRY family.</text>
</comment>
<comment type="online information" name="Protein Spotlight">
    <link uri="https://www.proteinspotlight.org/back_issues/080"/>
    <text>The tenuous nature of sex - Issue 80 of March 2007</text>
</comment>